<accession>Q9A4F5</accession>
<proteinExistence type="evidence at protein level"/>
<feature type="chain" id="PRO_0000408466" description="Antitoxin RelB3">
    <location>
        <begin position="1"/>
        <end position="117"/>
    </location>
</feature>
<comment type="function">
    <text evidence="1">Antitoxin component of a type II toxin-antitoxin (TA) system. Neutralizes the effect of cognate toxin RelE3, but no other RelE or ParE toxin.</text>
</comment>
<comment type="disruption phenotype">
    <text evidence="1">Cannot be disrupted, suggesting it is a functional antitoxin. No visible phenotype when the relBE3 operon is deleted.</text>
</comment>
<keyword id="KW-1185">Reference proteome</keyword>
<keyword id="KW-1277">Toxin-antitoxin system</keyword>
<organism>
    <name type="scientific">Caulobacter vibrioides (strain ATCC 19089 / CIP 103742 / CB 15)</name>
    <name type="common">Caulobacter crescentus</name>
    <dbReference type="NCBI Taxonomy" id="190650"/>
    <lineage>
        <taxon>Bacteria</taxon>
        <taxon>Pseudomonadati</taxon>
        <taxon>Pseudomonadota</taxon>
        <taxon>Alphaproteobacteria</taxon>
        <taxon>Caulobacterales</taxon>
        <taxon>Caulobacteraceae</taxon>
        <taxon>Caulobacter</taxon>
    </lineage>
</organism>
<protein>
    <recommendedName>
        <fullName>Antitoxin RelB3</fullName>
    </recommendedName>
</protein>
<sequence>MSGVIAPDRVDDKRRMEHSQNMALTITIPAELASRLRASAEAEGKDVDAYAIDALHVMSDEDWGYTDDDAYWRELRAHSDEVRRDGGIPLEDVKRWVASWDTENELPPPEPRIKARG</sequence>
<name>RELB3_CAUVC</name>
<gene>
    <name type="primary">relB3</name>
    <name type="ordered locus">CC_2879</name>
</gene>
<dbReference type="EMBL" id="AE005673">
    <property type="protein sequence ID" value="AAK24843.1"/>
    <property type="molecule type" value="Genomic_DNA"/>
</dbReference>
<dbReference type="PIR" id="G87605">
    <property type="entry name" value="G87605"/>
</dbReference>
<dbReference type="RefSeq" id="NP_421675.1">
    <property type="nucleotide sequence ID" value="NC_002696.2"/>
</dbReference>
<dbReference type="SMR" id="Q9A4F5"/>
<dbReference type="STRING" id="190650.CC_2879"/>
<dbReference type="EnsemblBacteria" id="AAK24843">
    <property type="protein sequence ID" value="AAK24843"/>
    <property type="gene ID" value="CC_2879"/>
</dbReference>
<dbReference type="KEGG" id="ccr:CC_2879"/>
<dbReference type="PATRIC" id="fig|190650.5.peg.2883"/>
<dbReference type="HOGENOM" id="CLU_2080543_0_0_5"/>
<dbReference type="BioCyc" id="CAULO:CC2879-MONOMER"/>
<dbReference type="Proteomes" id="UP000001816">
    <property type="component" value="Chromosome"/>
</dbReference>
<dbReference type="GO" id="GO:0009432">
    <property type="term" value="P:SOS response"/>
    <property type="evidence" value="ECO:0000269"/>
    <property type="project" value="CollecTF"/>
</dbReference>
<reference key="1">
    <citation type="journal article" date="2001" name="Proc. Natl. Acad. Sci. U.S.A.">
        <title>Complete genome sequence of Caulobacter crescentus.</title>
        <authorList>
            <person name="Nierman W.C."/>
            <person name="Feldblyum T.V."/>
            <person name="Laub M.T."/>
            <person name="Paulsen I.T."/>
            <person name="Nelson K.E."/>
            <person name="Eisen J.A."/>
            <person name="Heidelberg J.F."/>
            <person name="Alley M.R.K."/>
            <person name="Ohta N."/>
            <person name="Maddock J.R."/>
            <person name="Potocka I."/>
            <person name="Nelson W.C."/>
            <person name="Newton A."/>
            <person name="Stephens C."/>
            <person name="Phadke N.D."/>
            <person name="Ely B."/>
            <person name="DeBoy R.T."/>
            <person name="Dodson R.J."/>
            <person name="Durkin A.S."/>
            <person name="Gwinn M.L."/>
            <person name="Haft D.H."/>
            <person name="Kolonay J.F."/>
            <person name="Smit J."/>
            <person name="Craven M.B."/>
            <person name="Khouri H.M."/>
            <person name="Shetty J."/>
            <person name="Berry K.J."/>
            <person name="Utterback T.R."/>
            <person name="Tran K."/>
            <person name="Wolf A.M."/>
            <person name="Vamathevan J.J."/>
            <person name="Ermolaeva M.D."/>
            <person name="White O."/>
            <person name="Salzberg S.L."/>
            <person name="Venter J.C."/>
            <person name="Shapiro L."/>
            <person name="Fraser C.M."/>
        </authorList>
    </citation>
    <scope>NUCLEOTIDE SEQUENCE [LARGE SCALE GENOMIC DNA]</scope>
    <source>
        <strain>ATCC 19089 / CIP 103742 / CB 15</strain>
    </source>
</reference>
<reference key="2">
    <citation type="journal article" date="2005" name="Nucleic Acids Res.">
        <title>Toxin-antitoxin loci are highly abundant in free-living but lost from host-associated prokaryotes.</title>
        <authorList>
            <person name="Pandey D.P."/>
            <person name="Gerdes K."/>
        </authorList>
    </citation>
    <scope>POSSIBLE FUNCTION</scope>
    <source>
        <strain>ATCC 19089 / CIP 103742 / CB 15</strain>
    </source>
</reference>
<reference key="3">
    <citation type="journal article" date="2010" name="Mol. Microbiol.">
        <title>Interaction specificity, toxicity and regulation of a paralogous set of ParE/RelE-family toxin-antitoxin systems.</title>
        <authorList>
            <person name="Fiebig A."/>
            <person name="Castro Rojas C.M."/>
            <person name="Siegal-Gaskins D."/>
            <person name="Crosson S."/>
        </authorList>
    </citation>
    <scope>FUNCTION AS AN ANTITOXIN</scope>
    <scope>DISRUPTION PHENOTYPE</scope>
    <source>
        <strain>ATCC 19089 / CIP 103742 / CB 15</strain>
    </source>
</reference>
<evidence type="ECO:0000269" key="1">
    <source>
    </source>
</evidence>